<proteinExistence type="inferred from homology"/>
<keyword id="KW-0068">Autocatalytic cleavage</keyword>
<keyword id="KW-0963">Cytoplasm</keyword>
<keyword id="KW-0210">Decarboxylase</keyword>
<keyword id="KW-0456">Lyase</keyword>
<keyword id="KW-0566">Pantothenate biosynthesis</keyword>
<keyword id="KW-0670">Pyruvate</keyword>
<keyword id="KW-1185">Reference proteome</keyword>
<keyword id="KW-0704">Schiff base</keyword>
<keyword id="KW-0865">Zymogen</keyword>
<feature type="chain" id="PRO_0000306921" description="Aspartate 1-decarboxylase beta chain" evidence="1">
    <location>
        <begin position="1"/>
        <end position="24"/>
    </location>
</feature>
<feature type="chain" id="PRO_0000306922" description="Aspartate 1-decarboxylase alpha chain" evidence="1">
    <location>
        <begin position="25"/>
        <end position="126"/>
    </location>
</feature>
<feature type="active site" description="Schiff-base intermediate with substrate; via pyruvic acid" evidence="1">
    <location>
        <position position="25"/>
    </location>
</feature>
<feature type="active site" description="Proton donor" evidence="1">
    <location>
        <position position="58"/>
    </location>
</feature>
<feature type="binding site" evidence="1">
    <location>
        <position position="57"/>
    </location>
    <ligand>
        <name>substrate</name>
    </ligand>
</feature>
<feature type="binding site" evidence="1">
    <location>
        <begin position="73"/>
        <end position="75"/>
    </location>
    <ligand>
        <name>substrate</name>
    </ligand>
</feature>
<feature type="modified residue" description="Pyruvic acid (Ser)" evidence="1">
    <location>
        <position position="25"/>
    </location>
</feature>
<sequence length="126" mass="13745">MQCTMLKAKLHQARVTHAELEYEGSCAIDGDLMDMAGILEYEQIQIYNIDNGERFETYAIRGEAGSKIISVNGAAAHKAQPGDRVIICAYANYTSAELINFKPSLIYMAEGNEVKGTSNAIPVQVA</sequence>
<accession>Q0VSR5</accession>
<reference key="1">
    <citation type="journal article" date="2006" name="Nat. Biotechnol.">
        <title>Genome sequence of the ubiquitous hydrocarbon-degrading marine bacterium Alcanivorax borkumensis.</title>
        <authorList>
            <person name="Schneiker S."/>
            <person name="Martins dos Santos V.A.P."/>
            <person name="Bartels D."/>
            <person name="Bekel T."/>
            <person name="Brecht M."/>
            <person name="Buhrmester J."/>
            <person name="Chernikova T.N."/>
            <person name="Denaro R."/>
            <person name="Ferrer M."/>
            <person name="Gertler C."/>
            <person name="Goesmann A."/>
            <person name="Golyshina O.V."/>
            <person name="Kaminski F."/>
            <person name="Khachane A.N."/>
            <person name="Lang S."/>
            <person name="Linke B."/>
            <person name="McHardy A.C."/>
            <person name="Meyer F."/>
            <person name="Nechitaylo T."/>
            <person name="Puehler A."/>
            <person name="Regenhardt D."/>
            <person name="Rupp O."/>
            <person name="Sabirova J.S."/>
            <person name="Selbitschka W."/>
            <person name="Yakimov M.M."/>
            <person name="Timmis K.N."/>
            <person name="Vorhoelter F.-J."/>
            <person name="Weidner S."/>
            <person name="Kaiser O."/>
            <person name="Golyshin P.N."/>
        </authorList>
    </citation>
    <scope>NUCLEOTIDE SEQUENCE [LARGE SCALE GENOMIC DNA]</scope>
    <source>
        <strain>ATCC 700651 / DSM 11573 / NCIMB 13689 / SK2</strain>
    </source>
</reference>
<protein>
    <recommendedName>
        <fullName evidence="1">Aspartate 1-decarboxylase</fullName>
        <ecNumber evidence="1">4.1.1.11</ecNumber>
    </recommendedName>
    <alternativeName>
        <fullName evidence="1">Aspartate alpha-decarboxylase</fullName>
    </alternativeName>
    <component>
        <recommendedName>
            <fullName evidence="1">Aspartate 1-decarboxylase beta chain</fullName>
        </recommendedName>
    </component>
    <component>
        <recommendedName>
            <fullName evidence="1">Aspartate 1-decarboxylase alpha chain</fullName>
        </recommendedName>
    </component>
</protein>
<gene>
    <name evidence="1" type="primary">panD</name>
    <name type="ordered locus">ABO_0335</name>
</gene>
<organism>
    <name type="scientific">Alcanivorax borkumensis (strain ATCC 700651 / DSM 11573 / NCIMB 13689 / SK2)</name>
    <dbReference type="NCBI Taxonomy" id="393595"/>
    <lineage>
        <taxon>Bacteria</taxon>
        <taxon>Pseudomonadati</taxon>
        <taxon>Pseudomonadota</taxon>
        <taxon>Gammaproteobacteria</taxon>
        <taxon>Oceanospirillales</taxon>
        <taxon>Alcanivoracaceae</taxon>
        <taxon>Alcanivorax</taxon>
    </lineage>
</organism>
<dbReference type="EC" id="4.1.1.11" evidence="1"/>
<dbReference type="EMBL" id="AM286690">
    <property type="protein sequence ID" value="CAL15783.1"/>
    <property type="molecule type" value="Genomic_DNA"/>
</dbReference>
<dbReference type="RefSeq" id="WP_011587630.1">
    <property type="nucleotide sequence ID" value="NC_008260.1"/>
</dbReference>
<dbReference type="SMR" id="Q0VSR5"/>
<dbReference type="STRING" id="393595.ABO_0335"/>
<dbReference type="KEGG" id="abo:ABO_0335"/>
<dbReference type="eggNOG" id="COG0853">
    <property type="taxonomic scope" value="Bacteria"/>
</dbReference>
<dbReference type="HOGENOM" id="CLU_115305_2_1_6"/>
<dbReference type="OrthoDB" id="9803983at2"/>
<dbReference type="UniPathway" id="UPA00028">
    <property type="reaction ID" value="UER00002"/>
</dbReference>
<dbReference type="Proteomes" id="UP000008871">
    <property type="component" value="Chromosome"/>
</dbReference>
<dbReference type="GO" id="GO:0005829">
    <property type="term" value="C:cytosol"/>
    <property type="evidence" value="ECO:0007669"/>
    <property type="project" value="TreeGrafter"/>
</dbReference>
<dbReference type="GO" id="GO:0004068">
    <property type="term" value="F:aspartate 1-decarboxylase activity"/>
    <property type="evidence" value="ECO:0007669"/>
    <property type="project" value="UniProtKB-UniRule"/>
</dbReference>
<dbReference type="GO" id="GO:0006523">
    <property type="term" value="P:alanine biosynthetic process"/>
    <property type="evidence" value="ECO:0007669"/>
    <property type="project" value="InterPro"/>
</dbReference>
<dbReference type="GO" id="GO:0015940">
    <property type="term" value="P:pantothenate biosynthetic process"/>
    <property type="evidence" value="ECO:0007669"/>
    <property type="project" value="UniProtKB-UniRule"/>
</dbReference>
<dbReference type="CDD" id="cd06919">
    <property type="entry name" value="Asp_decarbox"/>
    <property type="match status" value="1"/>
</dbReference>
<dbReference type="Gene3D" id="2.40.40.20">
    <property type="match status" value="1"/>
</dbReference>
<dbReference type="HAMAP" id="MF_00446">
    <property type="entry name" value="PanD"/>
    <property type="match status" value="1"/>
</dbReference>
<dbReference type="InterPro" id="IPR009010">
    <property type="entry name" value="Asp_de-COase-like_dom_sf"/>
</dbReference>
<dbReference type="InterPro" id="IPR003190">
    <property type="entry name" value="Asp_decarbox"/>
</dbReference>
<dbReference type="NCBIfam" id="TIGR00223">
    <property type="entry name" value="panD"/>
    <property type="match status" value="1"/>
</dbReference>
<dbReference type="PANTHER" id="PTHR21012">
    <property type="entry name" value="ASPARTATE 1-DECARBOXYLASE"/>
    <property type="match status" value="1"/>
</dbReference>
<dbReference type="PANTHER" id="PTHR21012:SF0">
    <property type="entry name" value="ASPARTATE 1-DECARBOXYLASE"/>
    <property type="match status" value="1"/>
</dbReference>
<dbReference type="Pfam" id="PF02261">
    <property type="entry name" value="Asp_decarbox"/>
    <property type="match status" value="1"/>
</dbReference>
<dbReference type="PIRSF" id="PIRSF006246">
    <property type="entry name" value="Asp_decarbox"/>
    <property type="match status" value="1"/>
</dbReference>
<dbReference type="SUPFAM" id="SSF50692">
    <property type="entry name" value="ADC-like"/>
    <property type="match status" value="1"/>
</dbReference>
<name>PAND_ALCBS</name>
<comment type="function">
    <text evidence="1">Catalyzes the pyruvoyl-dependent decarboxylation of aspartate to produce beta-alanine.</text>
</comment>
<comment type="catalytic activity">
    <reaction evidence="1">
        <text>L-aspartate + H(+) = beta-alanine + CO2</text>
        <dbReference type="Rhea" id="RHEA:19497"/>
        <dbReference type="ChEBI" id="CHEBI:15378"/>
        <dbReference type="ChEBI" id="CHEBI:16526"/>
        <dbReference type="ChEBI" id="CHEBI:29991"/>
        <dbReference type="ChEBI" id="CHEBI:57966"/>
        <dbReference type="EC" id="4.1.1.11"/>
    </reaction>
</comment>
<comment type="cofactor">
    <cofactor evidence="1">
        <name>pyruvate</name>
        <dbReference type="ChEBI" id="CHEBI:15361"/>
    </cofactor>
    <text evidence="1">Binds 1 pyruvoyl group covalently per subunit.</text>
</comment>
<comment type="pathway">
    <text evidence="1">Cofactor biosynthesis; (R)-pantothenate biosynthesis; beta-alanine from L-aspartate: step 1/1.</text>
</comment>
<comment type="subunit">
    <text evidence="1">Heterooctamer of four alpha and four beta subunits.</text>
</comment>
<comment type="subcellular location">
    <subcellularLocation>
        <location evidence="1">Cytoplasm</location>
    </subcellularLocation>
</comment>
<comment type="PTM">
    <text evidence="1">Is synthesized initially as an inactive proenzyme, which is activated by self-cleavage at a specific serine bond to produce a beta-subunit with a hydroxyl group at its C-terminus and an alpha-subunit with a pyruvoyl group at its N-terminus.</text>
</comment>
<comment type="similarity">
    <text evidence="1">Belongs to the PanD family.</text>
</comment>
<evidence type="ECO:0000255" key="1">
    <source>
        <dbReference type="HAMAP-Rule" id="MF_00446"/>
    </source>
</evidence>